<dbReference type="EMBL" id="AC009991">
    <property type="protein sequence ID" value="AAF01523.1"/>
    <property type="status" value="ALT_SEQ"/>
    <property type="molecule type" value="Genomic_DNA"/>
</dbReference>
<dbReference type="EMBL" id="CP002686">
    <property type="protein sequence ID" value="AEE74988.1"/>
    <property type="molecule type" value="Genomic_DNA"/>
</dbReference>
<dbReference type="EMBL" id="AY045972">
    <property type="protein sequence ID" value="AAK76646.1"/>
    <property type="molecule type" value="mRNA"/>
</dbReference>
<dbReference type="EMBL" id="AY091355">
    <property type="protein sequence ID" value="AAM14294.1"/>
    <property type="molecule type" value="mRNA"/>
</dbReference>
<dbReference type="EMBL" id="BT000768">
    <property type="protein sequence ID" value="AAN31907.1"/>
    <property type="molecule type" value="mRNA"/>
</dbReference>
<dbReference type="EMBL" id="AY088170">
    <property type="protein sequence ID" value="AAM67338.1"/>
    <property type="molecule type" value="mRNA"/>
</dbReference>
<dbReference type="RefSeq" id="NP_974279.1">
    <property type="nucleotide sequence ID" value="NM_202550.2"/>
</dbReference>
<dbReference type="SMR" id="Q94AK6"/>
<dbReference type="FunCoup" id="Q94AK6">
    <property type="interactions" value="231"/>
</dbReference>
<dbReference type="IntAct" id="Q94AK6">
    <property type="interactions" value="1"/>
</dbReference>
<dbReference type="STRING" id="3702.Q94AK6"/>
<dbReference type="PaxDb" id="3702-AT3G10985.1"/>
<dbReference type="ProteomicsDB" id="232724"/>
<dbReference type="EnsemblPlants" id="AT3G10985.1">
    <property type="protein sequence ID" value="AT3G10985.1"/>
    <property type="gene ID" value="AT3G10985"/>
</dbReference>
<dbReference type="GeneID" id="2745879"/>
<dbReference type="Gramene" id="AT3G10985.1">
    <property type="protein sequence ID" value="AT3G10985.1"/>
    <property type="gene ID" value="AT3G10985"/>
</dbReference>
<dbReference type="KEGG" id="ath:AT3G10985"/>
<dbReference type="Araport" id="AT3G10985"/>
<dbReference type="TAIR" id="AT3G10985">
    <property type="gene designation" value="SAG20"/>
</dbReference>
<dbReference type="eggNOG" id="ENOG502RYF6">
    <property type="taxonomic scope" value="Eukaryota"/>
</dbReference>
<dbReference type="HOGENOM" id="CLU_081111_2_1_1"/>
<dbReference type="InParanoid" id="Q94AK6"/>
<dbReference type="OMA" id="SARNIAW"/>
<dbReference type="OrthoDB" id="667779at2759"/>
<dbReference type="PhylomeDB" id="Q94AK6"/>
<dbReference type="PRO" id="PR:Q94AK6"/>
<dbReference type="Proteomes" id="UP000006548">
    <property type="component" value="Chromosome 3"/>
</dbReference>
<dbReference type="ExpressionAtlas" id="Q94AK6">
    <property type="expression patterns" value="baseline and differential"/>
</dbReference>
<dbReference type="GO" id="GO:0010150">
    <property type="term" value="P:leaf senescence"/>
    <property type="evidence" value="ECO:0000270"/>
    <property type="project" value="UniProtKB"/>
</dbReference>
<dbReference type="GO" id="GO:0009620">
    <property type="term" value="P:response to fungus"/>
    <property type="evidence" value="ECO:0000270"/>
    <property type="project" value="TAIR"/>
</dbReference>
<dbReference type="GO" id="GO:0002238">
    <property type="term" value="P:response to molecule of fungal origin"/>
    <property type="evidence" value="ECO:0000270"/>
    <property type="project" value="UniProtKB"/>
</dbReference>
<dbReference type="GO" id="GO:0009624">
    <property type="term" value="P:response to nematode"/>
    <property type="evidence" value="ECO:0000270"/>
    <property type="project" value="UniProtKB"/>
</dbReference>
<dbReference type="GO" id="GO:0010193">
    <property type="term" value="P:response to ozone"/>
    <property type="evidence" value="ECO:0000270"/>
    <property type="project" value="UniProtKB"/>
</dbReference>
<dbReference type="Gene3D" id="3.10.450.50">
    <property type="match status" value="1"/>
</dbReference>
<dbReference type="InterPro" id="IPR032710">
    <property type="entry name" value="NTF2-like_dom_sf"/>
</dbReference>
<dbReference type="InterPro" id="IPR016533">
    <property type="entry name" value="Wound-induced_1/12_sub"/>
</dbReference>
<dbReference type="InterPro" id="IPR009798">
    <property type="entry name" value="Wun1-like"/>
</dbReference>
<dbReference type="PANTHER" id="PTHR33703">
    <property type="entry name" value="OS07G0691300 PROTEIN"/>
    <property type="match status" value="1"/>
</dbReference>
<dbReference type="PANTHER" id="PTHR33703:SF15">
    <property type="entry name" value="WOUND-INDUCED-LIKE PROTEIN"/>
    <property type="match status" value="1"/>
</dbReference>
<dbReference type="Pfam" id="PF07107">
    <property type="entry name" value="WI12"/>
    <property type="match status" value="1"/>
</dbReference>
<dbReference type="PIRSF" id="PIRSF007948">
    <property type="entry name" value="Wound-induced_Wun1"/>
    <property type="match status" value="1"/>
</dbReference>
<dbReference type="SUPFAM" id="SSF54427">
    <property type="entry name" value="NTF2-like"/>
    <property type="match status" value="1"/>
</dbReference>
<comment type="induction">
    <text evidence="1 2 3 4 5 6">Accumulates in leaves during senescence (PubMed:16603661, PubMed:9617813). Induced reversibly 4 days after exposure to ozone O(3) (PubMed:10444084, PubMed:16913859). Triggered transiently by Nep1, a fungal protein that causes necrosis (PubMed:12857840). Expressed in nematode-induced giant cells (e.g. M.javanica) at early stages, 3 days after infection (PubMed:20003167).</text>
</comment>
<comment type="sequence caution" evidence="9">
    <conflict type="erroneous gene model prediction">
        <sequence resource="EMBL-CDS" id="AAF01523"/>
    </conflict>
</comment>
<proteinExistence type="evidence at transcript level"/>
<feature type="chain" id="PRO_0000439877" description="Senescence associated gene 20">
    <location>
        <begin position="1"/>
        <end position="110"/>
    </location>
</feature>
<gene>
    <name evidence="7" type="primary">SAG20</name>
    <name evidence="8" type="synonym">WI12</name>
    <name evidence="10" type="ordered locus">At3g10985</name>
    <name evidence="11" type="ORF">F9F8.20</name>
</gene>
<reference key="1">
    <citation type="journal article" date="2000" name="Nature">
        <title>Sequence and analysis of chromosome 3 of the plant Arabidopsis thaliana.</title>
        <authorList>
            <person name="Salanoubat M."/>
            <person name="Lemcke K."/>
            <person name="Rieger M."/>
            <person name="Ansorge W."/>
            <person name="Unseld M."/>
            <person name="Fartmann B."/>
            <person name="Valle G."/>
            <person name="Bloecker H."/>
            <person name="Perez-Alonso M."/>
            <person name="Obermaier B."/>
            <person name="Delseny M."/>
            <person name="Boutry M."/>
            <person name="Grivell L.A."/>
            <person name="Mache R."/>
            <person name="Puigdomenech P."/>
            <person name="De Simone V."/>
            <person name="Choisne N."/>
            <person name="Artiguenave F."/>
            <person name="Robert C."/>
            <person name="Brottier P."/>
            <person name="Wincker P."/>
            <person name="Cattolico L."/>
            <person name="Weissenbach J."/>
            <person name="Saurin W."/>
            <person name="Quetier F."/>
            <person name="Schaefer M."/>
            <person name="Mueller-Auer S."/>
            <person name="Gabel C."/>
            <person name="Fuchs M."/>
            <person name="Benes V."/>
            <person name="Wurmbach E."/>
            <person name="Drzonek H."/>
            <person name="Erfle H."/>
            <person name="Jordan N."/>
            <person name="Bangert S."/>
            <person name="Wiedelmann R."/>
            <person name="Kranz H."/>
            <person name="Voss H."/>
            <person name="Holland R."/>
            <person name="Brandt P."/>
            <person name="Nyakatura G."/>
            <person name="Vezzi A."/>
            <person name="D'Angelo M."/>
            <person name="Pallavicini A."/>
            <person name="Toppo S."/>
            <person name="Simionati B."/>
            <person name="Conrad A."/>
            <person name="Hornischer K."/>
            <person name="Kauer G."/>
            <person name="Loehnert T.-H."/>
            <person name="Nordsiek G."/>
            <person name="Reichelt J."/>
            <person name="Scharfe M."/>
            <person name="Schoen O."/>
            <person name="Bargues M."/>
            <person name="Terol J."/>
            <person name="Climent J."/>
            <person name="Navarro P."/>
            <person name="Collado C."/>
            <person name="Perez-Perez A."/>
            <person name="Ottenwaelder B."/>
            <person name="Duchemin D."/>
            <person name="Cooke R."/>
            <person name="Laudie M."/>
            <person name="Berger-Llauro C."/>
            <person name="Purnelle B."/>
            <person name="Masuy D."/>
            <person name="de Haan M."/>
            <person name="Maarse A.C."/>
            <person name="Alcaraz J.-P."/>
            <person name="Cottet A."/>
            <person name="Casacuberta E."/>
            <person name="Monfort A."/>
            <person name="Argiriou A."/>
            <person name="Flores M."/>
            <person name="Liguori R."/>
            <person name="Vitale D."/>
            <person name="Mannhaupt G."/>
            <person name="Haase D."/>
            <person name="Schoof H."/>
            <person name="Rudd S."/>
            <person name="Zaccaria P."/>
            <person name="Mewes H.-W."/>
            <person name="Mayer K.F.X."/>
            <person name="Kaul S."/>
            <person name="Town C.D."/>
            <person name="Koo H.L."/>
            <person name="Tallon L.J."/>
            <person name="Jenkins J."/>
            <person name="Rooney T."/>
            <person name="Rizzo M."/>
            <person name="Walts A."/>
            <person name="Utterback T."/>
            <person name="Fujii C.Y."/>
            <person name="Shea T.P."/>
            <person name="Creasy T.H."/>
            <person name="Haas B."/>
            <person name="Maiti R."/>
            <person name="Wu D."/>
            <person name="Peterson J."/>
            <person name="Van Aken S."/>
            <person name="Pai G."/>
            <person name="Militscher J."/>
            <person name="Sellers P."/>
            <person name="Gill J.E."/>
            <person name="Feldblyum T.V."/>
            <person name="Preuss D."/>
            <person name="Lin X."/>
            <person name="Nierman W.C."/>
            <person name="Salzberg S.L."/>
            <person name="White O."/>
            <person name="Venter J.C."/>
            <person name="Fraser C.M."/>
            <person name="Kaneko T."/>
            <person name="Nakamura Y."/>
            <person name="Sato S."/>
            <person name="Kato T."/>
            <person name="Asamizu E."/>
            <person name="Sasamoto S."/>
            <person name="Kimura T."/>
            <person name="Idesawa K."/>
            <person name="Kawashima K."/>
            <person name="Kishida Y."/>
            <person name="Kiyokawa C."/>
            <person name="Kohara M."/>
            <person name="Matsumoto M."/>
            <person name="Matsuno A."/>
            <person name="Muraki A."/>
            <person name="Nakayama S."/>
            <person name="Nakazaki N."/>
            <person name="Shinpo S."/>
            <person name="Takeuchi C."/>
            <person name="Wada T."/>
            <person name="Watanabe A."/>
            <person name="Yamada M."/>
            <person name="Yasuda M."/>
            <person name="Tabata S."/>
        </authorList>
    </citation>
    <scope>NUCLEOTIDE SEQUENCE [LARGE SCALE GENOMIC DNA]</scope>
    <source>
        <strain>cv. Columbia</strain>
    </source>
</reference>
<reference key="2">
    <citation type="journal article" date="2017" name="Plant J.">
        <title>Araport11: a complete reannotation of the Arabidopsis thaliana reference genome.</title>
        <authorList>
            <person name="Cheng C.Y."/>
            <person name="Krishnakumar V."/>
            <person name="Chan A.P."/>
            <person name="Thibaud-Nissen F."/>
            <person name="Schobel S."/>
            <person name="Town C.D."/>
        </authorList>
    </citation>
    <scope>GENOME REANNOTATION</scope>
    <source>
        <strain>cv. Columbia</strain>
    </source>
</reference>
<reference key="3">
    <citation type="journal article" date="2003" name="Science">
        <title>Empirical analysis of transcriptional activity in the Arabidopsis genome.</title>
        <authorList>
            <person name="Yamada K."/>
            <person name="Lim J."/>
            <person name="Dale J.M."/>
            <person name="Chen H."/>
            <person name="Shinn P."/>
            <person name="Palm C.J."/>
            <person name="Southwick A.M."/>
            <person name="Wu H.C."/>
            <person name="Kim C.J."/>
            <person name="Nguyen M."/>
            <person name="Pham P.K."/>
            <person name="Cheuk R.F."/>
            <person name="Karlin-Newmann G."/>
            <person name="Liu S.X."/>
            <person name="Lam B."/>
            <person name="Sakano H."/>
            <person name="Wu T."/>
            <person name="Yu G."/>
            <person name="Miranda M."/>
            <person name="Quach H.L."/>
            <person name="Tripp M."/>
            <person name="Chang C.H."/>
            <person name="Lee J.M."/>
            <person name="Toriumi M.J."/>
            <person name="Chan M.M."/>
            <person name="Tang C.C."/>
            <person name="Onodera C.S."/>
            <person name="Deng J.M."/>
            <person name="Akiyama K."/>
            <person name="Ansari Y."/>
            <person name="Arakawa T."/>
            <person name="Banh J."/>
            <person name="Banno F."/>
            <person name="Bowser L."/>
            <person name="Brooks S.Y."/>
            <person name="Carninci P."/>
            <person name="Chao Q."/>
            <person name="Choy N."/>
            <person name="Enju A."/>
            <person name="Goldsmith A.D."/>
            <person name="Gurjal M."/>
            <person name="Hansen N.F."/>
            <person name="Hayashizaki Y."/>
            <person name="Johnson-Hopson C."/>
            <person name="Hsuan V.W."/>
            <person name="Iida K."/>
            <person name="Karnes M."/>
            <person name="Khan S."/>
            <person name="Koesema E."/>
            <person name="Ishida J."/>
            <person name="Jiang P.X."/>
            <person name="Jones T."/>
            <person name="Kawai J."/>
            <person name="Kamiya A."/>
            <person name="Meyers C."/>
            <person name="Nakajima M."/>
            <person name="Narusaka M."/>
            <person name="Seki M."/>
            <person name="Sakurai T."/>
            <person name="Satou M."/>
            <person name="Tamse R."/>
            <person name="Vaysberg M."/>
            <person name="Wallender E.K."/>
            <person name="Wong C."/>
            <person name="Yamamura Y."/>
            <person name="Yuan S."/>
            <person name="Shinozaki K."/>
            <person name="Davis R.W."/>
            <person name="Theologis A."/>
            <person name="Ecker J.R."/>
        </authorList>
    </citation>
    <scope>NUCLEOTIDE SEQUENCE [LARGE SCALE MRNA]</scope>
    <source>
        <strain>cv. Columbia</strain>
    </source>
</reference>
<reference key="4">
    <citation type="submission" date="2002-03" db="EMBL/GenBank/DDBJ databases">
        <title>Full-length cDNA from Arabidopsis thaliana.</title>
        <authorList>
            <person name="Brover V.V."/>
            <person name="Troukhan M.E."/>
            <person name="Alexandrov N.A."/>
            <person name="Lu Y.-P."/>
            <person name="Flavell R.B."/>
            <person name="Feldmann K.A."/>
        </authorList>
    </citation>
    <scope>NUCLEOTIDE SEQUENCE [LARGE SCALE MRNA]</scope>
</reference>
<reference key="5">
    <citation type="journal article" date="1998" name="Plant Mol. Biol.">
        <title>A comparison of the expression patterns of several senescence-associated genes in response to stress and hormone treatment.</title>
        <authorList>
            <person name="Weaver L.M."/>
            <person name="Gan S."/>
            <person name="Quirino B."/>
            <person name="Amasino R.M."/>
        </authorList>
    </citation>
    <scope>INDUCTION BY SENESCENCE</scope>
    <source>
        <strain>cv. Landsberg erecta</strain>
    </source>
</reference>
<reference key="6">
    <citation type="journal article" date="1999" name="Plant Physiol.">
        <title>Senescence-associated gene expression during ozone-induced leaf senescence in Arabidopsis.</title>
        <authorList>
            <person name="Miller J.D."/>
            <person name="Arteca R.N."/>
            <person name="Pell E.J."/>
        </authorList>
    </citation>
    <scope>INDUCTION BY OZONE</scope>
    <source>
        <strain>cv. Landsberg erecta</strain>
    </source>
</reference>
<reference key="7">
    <citation type="journal article" date="2003" name="Plant Physiol.">
        <title>Altered gene expression in three plant species in response to treatment with Nep1, a fungal protein that causes necrosis.</title>
        <authorList>
            <person name="Keates S.E."/>
            <person name="Kostman T.A."/>
            <person name="Anderson J.D."/>
            <person name="Bailey B.A."/>
        </authorList>
    </citation>
    <scope>INDUCTION BY NEP1</scope>
</reference>
<reference key="8">
    <citation type="journal article" date="2006" name="Plant Cell Environ.">
        <title>Gene expression profiles of O3-treated Arabidopsis plants.</title>
        <authorList>
            <person name="Tosti N."/>
            <person name="Pasqualini S."/>
            <person name="Borgogni A."/>
            <person name="Ederli L."/>
            <person name="Falistocco E."/>
            <person name="Crispi S."/>
            <person name="Paolocci F."/>
        </authorList>
    </citation>
    <scope>INDUCTION BY OZONE</scope>
</reference>
<reference key="9">
    <citation type="journal article" date="2006" name="Plant Physiol.">
        <title>Transcription analysis of arabidopsis membrane transporters and hormone pathways during developmental and induced leaf senescence.</title>
        <authorList>
            <person name="van der Graaff E."/>
            <person name="Schwacke R."/>
            <person name="Schneider A."/>
            <person name="Desimone M."/>
            <person name="Fluegge U.-I."/>
            <person name="Kunze R."/>
        </authorList>
    </citation>
    <scope>INDUCTION BY SENESCENCE</scope>
</reference>
<reference key="10">
    <citation type="journal article" date="2010" name="Plant J.">
        <title>Early transcriptomic events in microdissected Arabidopsis nematode-induced giant cells.</title>
        <authorList>
            <person name="Barcala M."/>
            <person name="Garcia A."/>
            <person name="Cabrera J."/>
            <person name="Casson S."/>
            <person name="Lindsey K."/>
            <person name="Favery B."/>
            <person name="Garcia-Casado G."/>
            <person name="Solano R."/>
            <person name="Fenoll C."/>
            <person name="Escobar C."/>
        </authorList>
    </citation>
    <scope>INDUCTION BY NEMATODE</scope>
    <source>
        <strain>cv. Columbia</strain>
    </source>
</reference>
<evidence type="ECO:0000269" key="1">
    <source>
    </source>
</evidence>
<evidence type="ECO:0000269" key="2">
    <source>
    </source>
</evidence>
<evidence type="ECO:0000269" key="3">
    <source>
    </source>
</evidence>
<evidence type="ECO:0000269" key="4">
    <source>
    </source>
</evidence>
<evidence type="ECO:0000269" key="5">
    <source>
    </source>
</evidence>
<evidence type="ECO:0000269" key="6">
    <source>
    </source>
</evidence>
<evidence type="ECO:0000303" key="7">
    <source>
    </source>
</evidence>
<evidence type="ECO:0000303" key="8">
    <source>
    </source>
</evidence>
<evidence type="ECO:0000305" key="9"/>
<evidence type="ECO:0000312" key="10">
    <source>
        <dbReference type="Araport" id="AT3G10985"/>
    </source>
</evidence>
<evidence type="ECO:0000312" key="11">
    <source>
        <dbReference type="EMBL" id="AAF01523.1"/>
    </source>
</evidence>
<accession>Q94AK6</accession>
<accession>Q9SRK9</accession>
<sequence length="110" mass="11464">MRVLTGGVSPSSSSFEFVPLSVVSFGSTVIAEGCDAATSISWIHAWTVANGIITQVREYSNTSLTVTRIGNVVAGRRSAEIAPPSHCSSVWESQFSGRAGKPVPGLVLAI</sequence>
<organism>
    <name type="scientific">Arabidopsis thaliana</name>
    <name type="common">Mouse-ear cress</name>
    <dbReference type="NCBI Taxonomy" id="3702"/>
    <lineage>
        <taxon>Eukaryota</taxon>
        <taxon>Viridiplantae</taxon>
        <taxon>Streptophyta</taxon>
        <taxon>Embryophyta</taxon>
        <taxon>Tracheophyta</taxon>
        <taxon>Spermatophyta</taxon>
        <taxon>Magnoliopsida</taxon>
        <taxon>eudicotyledons</taxon>
        <taxon>Gunneridae</taxon>
        <taxon>Pentapetalae</taxon>
        <taxon>rosids</taxon>
        <taxon>malvids</taxon>
        <taxon>Brassicales</taxon>
        <taxon>Brassicaceae</taxon>
        <taxon>Camelineae</taxon>
        <taxon>Arabidopsis</taxon>
    </lineage>
</organism>
<keyword id="KW-1185">Reference proteome</keyword>
<protein>
    <recommendedName>
        <fullName evidence="7">Senescence associated gene 20</fullName>
    </recommendedName>
    <alternativeName>
        <fullName evidence="8">Protein WOUND-INDUCED 12</fullName>
        <shortName evidence="8">AtWI-12</shortName>
    </alternativeName>
</protein>
<name>SAG20_ARATH</name>